<protein>
    <recommendedName>
        <fullName evidence="1">Carbamoyl phosphate synthase large chain</fullName>
        <ecNumber evidence="1">6.3.4.16</ecNumber>
        <ecNumber evidence="1">6.3.5.5</ecNumber>
    </recommendedName>
    <alternativeName>
        <fullName evidence="1">Carbamoyl phosphate synthetase ammonia chain</fullName>
    </alternativeName>
</protein>
<keyword id="KW-0028">Amino-acid biosynthesis</keyword>
<keyword id="KW-0055">Arginine biosynthesis</keyword>
<keyword id="KW-0067">ATP-binding</keyword>
<keyword id="KW-0436">Ligase</keyword>
<keyword id="KW-0460">Magnesium</keyword>
<keyword id="KW-0464">Manganese</keyword>
<keyword id="KW-0479">Metal-binding</keyword>
<keyword id="KW-0547">Nucleotide-binding</keyword>
<keyword id="KW-0665">Pyrimidine biosynthesis</keyword>
<keyword id="KW-1185">Reference proteome</keyword>
<keyword id="KW-0677">Repeat</keyword>
<proteinExistence type="inferred from homology"/>
<sequence length="1106" mass="122849">MPRREDIRSVLILGSGPIVIGQACEFDYSGTQAAKALKEKGIRVILLNSNPATIMTDPDLADATYVEPMTVPVVQKILEKEKPDAILPTVGGQTALNLALACNSAGILEKYNVELIGAKVDAIKKAEDRELFKKAMEKIGVRVPASGLANNLKDAVEIKNKLGLPLIVRPAFTLGGTGGGIAYTEETFEEVVSKGLKASPISQVLLEESVLGWKEFELEVMRDLADNVVIICSIENIDPMGVHTGDSITVAPQQTLSDKEYQNLRDMSIAIIREIGVETGGSNIQFAVNPTNGDVIVIEMNPRVSRSSALASKATGFPIAKIAALLSIGYTLDEIKNDITRVTPASFEPSIDYVVTKVPRFAFEKFPGTDDTLGVQMKAVGEAMAIGRTFKESFQKALRSLEIDRYGFGSDGYFQELLYSRSLNNDQRKEWIDSHLKRPNDKRIFYVKLAFDEGYTVDQIHDLCKIDRWFLWQMEGLLKLEKEYSEKGNSILYKMKQVGFSNRQLSFLKNKKQILDLLDGNLRVDLKKTEIQNLLKLSEEEIEVELGSKKILPVYKRIDTCAGEFEAYTPYFYSSYDEEDESDVTNAKSVMILGGGPNRIGQGIEFDYCCCQASYALQDLGIESIMINSNPETVSTDYDTSDRLYFEPLTLEDVYRIYQNEKPEGVIIQFGGQTPLKLAKDLEKKGVKILGTSPDSIDRAEDRKRFVEVLEKLKLNSPESGIATSMEEAREIAHKIGYPVLVRPSYVLGGRAMLIINEEKELDRYMEKAEEISKDRPLLIDSFLEDAIEVDVDALCDGKEVFVTGIMEHIEEAGIHSGDSACVLPPQTLSKNMMDEIRKATVNLALELQVKGLINIQYAVKNEILYIIEVNPRASRTVPFVSKALGHPIVKYATRIMMGESLKSLPLPKEMEFSQVSVKEVVLPFNKFPGVDTILGPEMRSTGEVMGIASTAGEAFLKSQYMAGDELPSQGTVFVSINDKTKAELLSYIKDLSELGFNLIATSGTHKFLSDNGILSSKINKVYDGIFPTALDYIRENKIHLIINTPLSRVTRDDSFTIRQAAIRFKVPCLTTSNAAKALIKGMVEMKNKGFTIHSLQEIHAMPKIL</sequence>
<reference key="1">
    <citation type="journal article" date="2003" name="Nature">
        <title>Unique physiological and pathogenic features of Leptospira interrogans revealed by whole-genome sequencing.</title>
        <authorList>
            <person name="Ren S.-X."/>
            <person name="Fu G."/>
            <person name="Jiang X.-G."/>
            <person name="Zeng R."/>
            <person name="Miao Y.-G."/>
            <person name="Xu H."/>
            <person name="Zhang Y.-X."/>
            <person name="Xiong H."/>
            <person name="Lu G."/>
            <person name="Lu L.-F."/>
            <person name="Jiang H.-Q."/>
            <person name="Jia J."/>
            <person name="Tu Y.-F."/>
            <person name="Jiang J.-X."/>
            <person name="Gu W.-Y."/>
            <person name="Zhang Y.-Q."/>
            <person name="Cai Z."/>
            <person name="Sheng H.-H."/>
            <person name="Yin H.-F."/>
            <person name="Zhang Y."/>
            <person name="Zhu G.-F."/>
            <person name="Wan M."/>
            <person name="Huang H.-L."/>
            <person name="Qian Z."/>
            <person name="Wang S.-Y."/>
            <person name="Ma W."/>
            <person name="Yao Z.-J."/>
            <person name="Shen Y."/>
            <person name="Qiang B.-Q."/>
            <person name="Xia Q.-C."/>
            <person name="Guo X.-K."/>
            <person name="Danchin A."/>
            <person name="Saint Girons I."/>
            <person name="Somerville R.L."/>
            <person name="Wen Y.-M."/>
            <person name="Shi M.-H."/>
            <person name="Chen Z."/>
            <person name="Xu J.-G."/>
            <person name="Zhao G.-P."/>
        </authorList>
    </citation>
    <scope>NUCLEOTIDE SEQUENCE [LARGE SCALE GENOMIC DNA]</scope>
    <source>
        <strain>56601</strain>
    </source>
</reference>
<gene>
    <name evidence="1" type="primary">carB</name>
    <name type="ordered locus">LA_0727</name>
</gene>
<dbReference type="EC" id="6.3.4.16" evidence="1"/>
<dbReference type="EC" id="6.3.5.5" evidence="1"/>
<dbReference type="EMBL" id="AE010300">
    <property type="protein sequence ID" value="AAN47926.1"/>
    <property type="molecule type" value="Genomic_DNA"/>
</dbReference>
<dbReference type="RefSeq" id="NP_710908.1">
    <property type="nucleotide sequence ID" value="NC_004342.2"/>
</dbReference>
<dbReference type="RefSeq" id="WP_001137995.1">
    <property type="nucleotide sequence ID" value="NC_004342.2"/>
</dbReference>
<dbReference type="SMR" id="Q8F832"/>
<dbReference type="FunCoup" id="Q8F832">
    <property type="interactions" value="489"/>
</dbReference>
<dbReference type="STRING" id="189518.LA_0727"/>
<dbReference type="PaxDb" id="189518-LA_0727"/>
<dbReference type="EnsemblBacteria" id="AAN47926">
    <property type="protein sequence ID" value="AAN47926"/>
    <property type="gene ID" value="LA_0727"/>
</dbReference>
<dbReference type="GeneID" id="61142757"/>
<dbReference type="KEGG" id="lil:LA_0727"/>
<dbReference type="PATRIC" id="fig|189518.3.peg.731"/>
<dbReference type="HOGENOM" id="CLU_000513_1_0_12"/>
<dbReference type="InParanoid" id="Q8F832"/>
<dbReference type="OrthoDB" id="9804197at2"/>
<dbReference type="UniPathway" id="UPA00068">
    <property type="reaction ID" value="UER00171"/>
</dbReference>
<dbReference type="UniPathway" id="UPA00070">
    <property type="reaction ID" value="UER00115"/>
</dbReference>
<dbReference type="Proteomes" id="UP000001408">
    <property type="component" value="Chromosome I"/>
</dbReference>
<dbReference type="GO" id="GO:0005737">
    <property type="term" value="C:cytoplasm"/>
    <property type="evidence" value="ECO:0000318"/>
    <property type="project" value="GO_Central"/>
</dbReference>
<dbReference type="GO" id="GO:0005524">
    <property type="term" value="F:ATP binding"/>
    <property type="evidence" value="ECO:0007669"/>
    <property type="project" value="UniProtKB-UniRule"/>
</dbReference>
<dbReference type="GO" id="GO:0004087">
    <property type="term" value="F:carbamoyl-phosphate synthase (ammonia) activity"/>
    <property type="evidence" value="ECO:0007669"/>
    <property type="project" value="RHEA"/>
</dbReference>
<dbReference type="GO" id="GO:0004088">
    <property type="term" value="F:carbamoyl-phosphate synthase (glutamine-hydrolyzing) activity"/>
    <property type="evidence" value="ECO:0007669"/>
    <property type="project" value="UniProtKB-UniRule"/>
</dbReference>
<dbReference type="GO" id="GO:0046872">
    <property type="term" value="F:metal ion binding"/>
    <property type="evidence" value="ECO:0007669"/>
    <property type="project" value="UniProtKB-KW"/>
</dbReference>
<dbReference type="GO" id="GO:0044205">
    <property type="term" value="P:'de novo' UMP biosynthetic process"/>
    <property type="evidence" value="ECO:0007669"/>
    <property type="project" value="UniProtKB-UniRule"/>
</dbReference>
<dbReference type="GO" id="GO:0006541">
    <property type="term" value="P:glutamine metabolic process"/>
    <property type="evidence" value="ECO:0000318"/>
    <property type="project" value="GO_Central"/>
</dbReference>
<dbReference type="GO" id="GO:0006526">
    <property type="term" value="P:L-arginine biosynthetic process"/>
    <property type="evidence" value="ECO:0007669"/>
    <property type="project" value="UniProtKB-UniRule"/>
</dbReference>
<dbReference type="CDD" id="cd01424">
    <property type="entry name" value="MGS_CPS_II"/>
    <property type="match status" value="1"/>
</dbReference>
<dbReference type="FunFam" id="1.10.1030.10:FF:000002">
    <property type="entry name" value="Carbamoyl-phosphate synthase large chain"/>
    <property type="match status" value="1"/>
</dbReference>
<dbReference type="FunFam" id="3.30.1490.20:FF:000001">
    <property type="entry name" value="Carbamoyl-phosphate synthase large chain"/>
    <property type="match status" value="1"/>
</dbReference>
<dbReference type="FunFam" id="3.30.470.20:FF:000007">
    <property type="entry name" value="Carbamoyl-phosphate synthase large chain"/>
    <property type="match status" value="1"/>
</dbReference>
<dbReference type="FunFam" id="3.30.470.20:FF:000013">
    <property type="entry name" value="Carbamoyl-phosphate synthase large chain"/>
    <property type="match status" value="1"/>
</dbReference>
<dbReference type="FunFam" id="3.40.50.20:FF:000001">
    <property type="entry name" value="Carbamoyl-phosphate synthase large chain"/>
    <property type="match status" value="1"/>
</dbReference>
<dbReference type="FunFam" id="3.40.50.20:FF:000003">
    <property type="entry name" value="Carbamoyl-phosphate synthase large chain"/>
    <property type="match status" value="1"/>
</dbReference>
<dbReference type="Gene3D" id="3.40.50.20">
    <property type="match status" value="2"/>
</dbReference>
<dbReference type="Gene3D" id="3.30.470.20">
    <property type="entry name" value="ATP-grasp fold, B domain"/>
    <property type="match status" value="2"/>
</dbReference>
<dbReference type="Gene3D" id="1.10.1030.10">
    <property type="entry name" value="Carbamoyl-phosphate synthetase, large subunit oligomerisation domain"/>
    <property type="match status" value="1"/>
</dbReference>
<dbReference type="Gene3D" id="3.40.50.1380">
    <property type="entry name" value="Methylglyoxal synthase-like domain"/>
    <property type="match status" value="1"/>
</dbReference>
<dbReference type="HAMAP" id="MF_01210_A">
    <property type="entry name" value="CPSase_L_chain_A"/>
    <property type="match status" value="1"/>
</dbReference>
<dbReference type="HAMAP" id="MF_01210_B">
    <property type="entry name" value="CPSase_L_chain_B"/>
    <property type="match status" value="1"/>
</dbReference>
<dbReference type="InterPro" id="IPR011761">
    <property type="entry name" value="ATP-grasp"/>
</dbReference>
<dbReference type="InterPro" id="IPR006275">
    <property type="entry name" value="CarbamoylP_synth_lsu"/>
</dbReference>
<dbReference type="InterPro" id="IPR005480">
    <property type="entry name" value="CarbamoylP_synth_lsu_oligo"/>
</dbReference>
<dbReference type="InterPro" id="IPR036897">
    <property type="entry name" value="CarbamoylP_synth_lsu_oligo_sf"/>
</dbReference>
<dbReference type="InterPro" id="IPR005479">
    <property type="entry name" value="CbamoylP_synth_lsu-like_ATP-bd"/>
</dbReference>
<dbReference type="InterPro" id="IPR005483">
    <property type="entry name" value="CbamoylP_synth_lsu_CPSase_dom"/>
</dbReference>
<dbReference type="InterPro" id="IPR011607">
    <property type="entry name" value="MGS-like_dom"/>
</dbReference>
<dbReference type="InterPro" id="IPR036914">
    <property type="entry name" value="MGS-like_dom_sf"/>
</dbReference>
<dbReference type="InterPro" id="IPR033937">
    <property type="entry name" value="MGS_CPS_CarB"/>
</dbReference>
<dbReference type="InterPro" id="IPR016185">
    <property type="entry name" value="PreATP-grasp_dom_sf"/>
</dbReference>
<dbReference type="NCBIfam" id="TIGR01369">
    <property type="entry name" value="CPSaseII_lrg"/>
    <property type="match status" value="1"/>
</dbReference>
<dbReference type="NCBIfam" id="NF003671">
    <property type="entry name" value="PRK05294.1"/>
    <property type="match status" value="1"/>
</dbReference>
<dbReference type="PANTHER" id="PTHR11405:SF53">
    <property type="entry name" value="CARBAMOYL-PHOSPHATE SYNTHASE [AMMONIA], MITOCHONDRIAL"/>
    <property type="match status" value="1"/>
</dbReference>
<dbReference type="PANTHER" id="PTHR11405">
    <property type="entry name" value="CARBAMOYLTRANSFERASE FAMILY MEMBER"/>
    <property type="match status" value="1"/>
</dbReference>
<dbReference type="Pfam" id="PF02786">
    <property type="entry name" value="CPSase_L_D2"/>
    <property type="match status" value="2"/>
</dbReference>
<dbReference type="Pfam" id="PF02787">
    <property type="entry name" value="CPSase_L_D3"/>
    <property type="match status" value="1"/>
</dbReference>
<dbReference type="Pfam" id="PF02142">
    <property type="entry name" value="MGS"/>
    <property type="match status" value="1"/>
</dbReference>
<dbReference type="PRINTS" id="PR00098">
    <property type="entry name" value="CPSASE"/>
</dbReference>
<dbReference type="SMART" id="SM01096">
    <property type="entry name" value="CPSase_L_D3"/>
    <property type="match status" value="1"/>
</dbReference>
<dbReference type="SMART" id="SM00851">
    <property type="entry name" value="MGS"/>
    <property type="match status" value="1"/>
</dbReference>
<dbReference type="SUPFAM" id="SSF48108">
    <property type="entry name" value="Carbamoyl phosphate synthetase, large subunit connection domain"/>
    <property type="match status" value="1"/>
</dbReference>
<dbReference type="SUPFAM" id="SSF56059">
    <property type="entry name" value="Glutathione synthetase ATP-binding domain-like"/>
    <property type="match status" value="2"/>
</dbReference>
<dbReference type="SUPFAM" id="SSF52335">
    <property type="entry name" value="Methylglyoxal synthase-like"/>
    <property type="match status" value="1"/>
</dbReference>
<dbReference type="SUPFAM" id="SSF52440">
    <property type="entry name" value="PreATP-grasp domain"/>
    <property type="match status" value="2"/>
</dbReference>
<dbReference type="PROSITE" id="PS50975">
    <property type="entry name" value="ATP_GRASP"/>
    <property type="match status" value="2"/>
</dbReference>
<dbReference type="PROSITE" id="PS00866">
    <property type="entry name" value="CPSASE_1"/>
    <property type="match status" value="1"/>
</dbReference>
<dbReference type="PROSITE" id="PS00867">
    <property type="entry name" value="CPSASE_2"/>
    <property type="match status" value="2"/>
</dbReference>
<dbReference type="PROSITE" id="PS51855">
    <property type="entry name" value="MGS"/>
    <property type="match status" value="1"/>
</dbReference>
<comment type="function">
    <text evidence="1">Large subunit of the glutamine-dependent carbamoyl phosphate synthetase (CPSase). CPSase catalyzes the formation of carbamoyl phosphate from the ammonia moiety of glutamine, carbonate, and phosphate donated by ATP, constituting the first step of 2 biosynthetic pathways, one leading to arginine and/or urea and the other to pyrimidine nucleotides. The large subunit (synthetase) binds the substrates ammonia (free or transferred from glutamine from the small subunit), hydrogencarbonate and ATP and carries out an ATP-coupled ligase reaction, activating hydrogencarbonate by forming carboxy phosphate which reacts with ammonia to form carbamoyl phosphate.</text>
</comment>
<comment type="catalytic activity">
    <reaction evidence="1">
        <text>hydrogencarbonate + L-glutamine + 2 ATP + H2O = carbamoyl phosphate + L-glutamate + 2 ADP + phosphate + 2 H(+)</text>
        <dbReference type="Rhea" id="RHEA:18633"/>
        <dbReference type="ChEBI" id="CHEBI:15377"/>
        <dbReference type="ChEBI" id="CHEBI:15378"/>
        <dbReference type="ChEBI" id="CHEBI:17544"/>
        <dbReference type="ChEBI" id="CHEBI:29985"/>
        <dbReference type="ChEBI" id="CHEBI:30616"/>
        <dbReference type="ChEBI" id="CHEBI:43474"/>
        <dbReference type="ChEBI" id="CHEBI:58228"/>
        <dbReference type="ChEBI" id="CHEBI:58359"/>
        <dbReference type="ChEBI" id="CHEBI:456216"/>
        <dbReference type="EC" id="6.3.5.5"/>
    </reaction>
</comment>
<comment type="catalytic activity">
    <molecule>Carbamoyl phosphate synthase large chain</molecule>
    <reaction evidence="1">
        <text>hydrogencarbonate + NH4(+) + 2 ATP = carbamoyl phosphate + 2 ADP + phosphate + 2 H(+)</text>
        <dbReference type="Rhea" id="RHEA:18029"/>
        <dbReference type="ChEBI" id="CHEBI:15378"/>
        <dbReference type="ChEBI" id="CHEBI:17544"/>
        <dbReference type="ChEBI" id="CHEBI:28938"/>
        <dbReference type="ChEBI" id="CHEBI:30616"/>
        <dbReference type="ChEBI" id="CHEBI:43474"/>
        <dbReference type="ChEBI" id="CHEBI:58228"/>
        <dbReference type="ChEBI" id="CHEBI:456216"/>
        <dbReference type="EC" id="6.3.4.16"/>
    </reaction>
</comment>
<comment type="cofactor">
    <cofactor evidence="1">
        <name>Mg(2+)</name>
        <dbReference type="ChEBI" id="CHEBI:18420"/>
    </cofactor>
    <cofactor evidence="1">
        <name>Mn(2+)</name>
        <dbReference type="ChEBI" id="CHEBI:29035"/>
    </cofactor>
    <text evidence="1">Binds 4 Mg(2+) or Mn(2+) ions per subunit.</text>
</comment>
<comment type="pathway">
    <text evidence="1">Amino-acid biosynthesis; L-arginine biosynthesis; carbamoyl phosphate from bicarbonate: step 1/1.</text>
</comment>
<comment type="pathway">
    <text evidence="1">Pyrimidine metabolism; UMP biosynthesis via de novo pathway; (S)-dihydroorotate from bicarbonate: step 1/3.</text>
</comment>
<comment type="subunit">
    <text evidence="1">Composed of two chains; the small (or glutamine) chain promotes the hydrolysis of glutamine to ammonia, which is used by the large (or ammonia) chain to synthesize carbamoyl phosphate. Tetramer of heterodimers (alpha,beta)4.</text>
</comment>
<comment type="domain">
    <text evidence="1">The large subunit is composed of 2 ATP-grasp domains that are involved in binding the 2 ATP molecules needed for carbamoyl phosphate synthesis. The N-terminal ATP-grasp domain (referred to as the carboxyphosphate synthetic component) catalyzes the ATP-dependent phosphorylation of hydrogencarbonate to carboxyphosphate and the subsequent nucleophilic attack by ammonia to form a carbamate intermediate. The C-terminal ATP-grasp domain (referred to as the carbamoyl phosphate synthetic component) then catalyzes the phosphorylation of carbamate with the second ATP to form the end product carbamoyl phosphate. The reactive and unstable enzyme intermediates are sequentially channeled from one active site to the next through the interior of the protein over a distance of at least 96 A.</text>
</comment>
<comment type="similarity">
    <text evidence="1">Belongs to the CarB family.</text>
</comment>
<name>CARB_LEPIN</name>
<feature type="chain" id="PRO_0000145017" description="Carbamoyl phosphate synthase large chain">
    <location>
        <begin position="1"/>
        <end position="1106"/>
    </location>
</feature>
<feature type="domain" description="ATP-grasp 1" evidence="1">
    <location>
        <begin position="133"/>
        <end position="328"/>
    </location>
</feature>
<feature type="domain" description="ATP-grasp 2" evidence="1">
    <location>
        <begin position="707"/>
        <end position="898"/>
    </location>
</feature>
<feature type="domain" description="MGS-like" evidence="1">
    <location>
        <begin position="965"/>
        <end position="1106"/>
    </location>
</feature>
<feature type="region of interest" description="Carboxyphosphate synthetic domain" evidence="1">
    <location>
        <begin position="1"/>
        <end position="402"/>
    </location>
</feature>
<feature type="region of interest" description="Oligomerization domain" evidence="1">
    <location>
        <begin position="403"/>
        <end position="582"/>
    </location>
</feature>
<feature type="region of interest" description="Carbamoyl phosphate synthetic domain" evidence="1">
    <location>
        <begin position="583"/>
        <end position="964"/>
    </location>
</feature>
<feature type="region of interest" description="Allosteric domain" evidence="1">
    <location>
        <begin position="965"/>
        <end position="1106"/>
    </location>
</feature>
<feature type="binding site" evidence="1">
    <location>
        <position position="129"/>
    </location>
    <ligand>
        <name>ATP</name>
        <dbReference type="ChEBI" id="CHEBI:30616"/>
        <label>1</label>
    </ligand>
</feature>
<feature type="binding site" evidence="1">
    <location>
        <position position="169"/>
    </location>
    <ligand>
        <name>ATP</name>
        <dbReference type="ChEBI" id="CHEBI:30616"/>
        <label>1</label>
    </ligand>
</feature>
<feature type="binding site" evidence="1">
    <location>
        <position position="175"/>
    </location>
    <ligand>
        <name>ATP</name>
        <dbReference type="ChEBI" id="CHEBI:30616"/>
        <label>1</label>
    </ligand>
</feature>
<feature type="binding site" evidence="1">
    <location>
        <position position="176"/>
    </location>
    <ligand>
        <name>ATP</name>
        <dbReference type="ChEBI" id="CHEBI:30616"/>
        <label>1</label>
    </ligand>
</feature>
<feature type="binding site" evidence="1">
    <location>
        <position position="208"/>
    </location>
    <ligand>
        <name>ATP</name>
        <dbReference type="ChEBI" id="CHEBI:30616"/>
        <label>1</label>
    </ligand>
</feature>
<feature type="binding site" evidence="1">
    <location>
        <position position="210"/>
    </location>
    <ligand>
        <name>ATP</name>
        <dbReference type="ChEBI" id="CHEBI:30616"/>
        <label>1</label>
    </ligand>
</feature>
<feature type="binding site" evidence="1">
    <location>
        <position position="215"/>
    </location>
    <ligand>
        <name>ATP</name>
        <dbReference type="ChEBI" id="CHEBI:30616"/>
        <label>1</label>
    </ligand>
</feature>
<feature type="binding site" evidence="1">
    <location>
        <position position="241"/>
    </location>
    <ligand>
        <name>ATP</name>
        <dbReference type="ChEBI" id="CHEBI:30616"/>
        <label>1</label>
    </ligand>
</feature>
<feature type="binding site" evidence="1">
    <location>
        <position position="242"/>
    </location>
    <ligand>
        <name>ATP</name>
        <dbReference type="ChEBI" id="CHEBI:30616"/>
        <label>1</label>
    </ligand>
</feature>
<feature type="binding site" evidence="1">
    <location>
        <position position="243"/>
    </location>
    <ligand>
        <name>ATP</name>
        <dbReference type="ChEBI" id="CHEBI:30616"/>
        <label>1</label>
    </ligand>
</feature>
<feature type="binding site" evidence="1">
    <location>
        <position position="285"/>
    </location>
    <ligand>
        <name>ATP</name>
        <dbReference type="ChEBI" id="CHEBI:30616"/>
        <label>1</label>
    </ligand>
</feature>
<feature type="binding site" evidence="1">
    <location>
        <position position="285"/>
    </location>
    <ligand>
        <name>Mg(2+)</name>
        <dbReference type="ChEBI" id="CHEBI:18420"/>
        <label>1</label>
    </ligand>
</feature>
<feature type="binding site" evidence="1">
    <location>
        <position position="285"/>
    </location>
    <ligand>
        <name>Mn(2+)</name>
        <dbReference type="ChEBI" id="CHEBI:29035"/>
        <label>1</label>
    </ligand>
</feature>
<feature type="binding site" evidence="1">
    <location>
        <position position="299"/>
    </location>
    <ligand>
        <name>ATP</name>
        <dbReference type="ChEBI" id="CHEBI:30616"/>
        <label>1</label>
    </ligand>
</feature>
<feature type="binding site" evidence="1">
    <location>
        <position position="299"/>
    </location>
    <ligand>
        <name>Mg(2+)</name>
        <dbReference type="ChEBI" id="CHEBI:18420"/>
        <label>1</label>
    </ligand>
</feature>
<feature type="binding site" evidence="1">
    <location>
        <position position="299"/>
    </location>
    <ligand>
        <name>Mg(2+)</name>
        <dbReference type="ChEBI" id="CHEBI:18420"/>
        <label>2</label>
    </ligand>
</feature>
<feature type="binding site" evidence="1">
    <location>
        <position position="299"/>
    </location>
    <ligand>
        <name>Mn(2+)</name>
        <dbReference type="ChEBI" id="CHEBI:29035"/>
        <label>1</label>
    </ligand>
</feature>
<feature type="binding site" evidence="1">
    <location>
        <position position="299"/>
    </location>
    <ligand>
        <name>Mn(2+)</name>
        <dbReference type="ChEBI" id="CHEBI:29035"/>
        <label>2</label>
    </ligand>
</feature>
<feature type="binding site" evidence="1">
    <location>
        <position position="301"/>
    </location>
    <ligand>
        <name>Mg(2+)</name>
        <dbReference type="ChEBI" id="CHEBI:18420"/>
        <label>2</label>
    </ligand>
</feature>
<feature type="binding site" evidence="1">
    <location>
        <position position="301"/>
    </location>
    <ligand>
        <name>Mn(2+)</name>
        <dbReference type="ChEBI" id="CHEBI:29035"/>
        <label>2</label>
    </ligand>
</feature>
<feature type="binding site" evidence="1">
    <location>
        <position position="743"/>
    </location>
    <ligand>
        <name>ATP</name>
        <dbReference type="ChEBI" id="CHEBI:30616"/>
        <label>2</label>
    </ligand>
</feature>
<feature type="binding site" evidence="1">
    <location>
        <position position="782"/>
    </location>
    <ligand>
        <name>ATP</name>
        <dbReference type="ChEBI" id="CHEBI:30616"/>
        <label>2</label>
    </ligand>
</feature>
<feature type="binding site" evidence="1">
    <location>
        <position position="784"/>
    </location>
    <ligand>
        <name>ATP</name>
        <dbReference type="ChEBI" id="CHEBI:30616"/>
        <label>2</label>
    </ligand>
</feature>
<feature type="binding site" evidence="1">
    <location>
        <position position="789"/>
    </location>
    <ligand>
        <name>ATP</name>
        <dbReference type="ChEBI" id="CHEBI:30616"/>
        <label>2</label>
    </ligand>
</feature>
<feature type="binding site" evidence="1">
    <location>
        <position position="814"/>
    </location>
    <ligand>
        <name>ATP</name>
        <dbReference type="ChEBI" id="CHEBI:30616"/>
        <label>2</label>
    </ligand>
</feature>
<feature type="binding site" evidence="1">
    <location>
        <position position="815"/>
    </location>
    <ligand>
        <name>ATP</name>
        <dbReference type="ChEBI" id="CHEBI:30616"/>
        <label>2</label>
    </ligand>
</feature>
<feature type="binding site" evidence="1">
    <location>
        <position position="816"/>
    </location>
    <ligand>
        <name>ATP</name>
        <dbReference type="ChEBI" id="CHEBI:30616"/>
        <label>2</label>
    </ligand>
</feature>
<feature type="binding site" evidence="1">
    <location>
        <position position="817"/>
    </location>
    <ligand>
        <name>ATP</name>
        <dbReference type="ChEBI" id="CHEBI:30616"/>
        <label>2</label>
    </ligand>
</feature>
<feature type="binding site" evidence="1">
    <location>
        <position position="857"/>
    </location>
    <ligand>
        <name>ATP</name>
        <dbReference type="ChEBI" id="CHEBI:30616"/>
        <label>2</label>
    </ligand>
</feature>
<feature type="binding site" evidence="1">
    <location>
        <position position="857"/>
    </location>
    <ligand>
        <name>Mg(2+)</name>
        <dbReference type="ChEBI" id="CHEBI:18420"/>
        <label>3</label>
    </ligand>
</feature>
<feature type="binding site" evidence="1">
    <location>
        <position position="857"/>
    </location>
    <ligand>
        <name>Mn(2+)</name>
        <dbReference type="ChEBI" id="CHEBI:29035"/>
        <label>3</label>
    </ligand>
</feature>
<feature type="binding site" evidence="1">
    <location>
        <position position="869"/>
    </location>
    <ligand>
        <name>ATP</name>
        <dbReference type="ChEBI" id="CHEBI:30616"/>
        <label>2</label>
    </ligand>
</feature>
<feature type="binding site" evidence="1">
    <location>
        <position position="869"/>
    </location>
    <ligand>
        <name>Mg(2+)</name>
        <dbReference type="ChEBI" id="CHEBI:18420"/>
        <label>3</label>
    </ligand>
</feature>
<feature type="binding site" evidence="1">
    <location>
        <position position="869"/>
    </location>
    <ligand>
        <name>Mg(2+)</name>
        <dbReference type="ChEBI" id="CHEBI:18420"/>
        <label>4</label>
    </ligand>
</feature>
<feature type="binding site" evidence="1">
    <location>
        <position position="869"/>
    </location>
    <ligand>
        <name>Mn(2+)</name>
        <dbReference type="ChEBI" id="CHEBI:29035"/>
        <label>3</label>
    </ligand>
</feature>
<feature type="binding site" evidence="1">
    <location>
        <position position="869"/>
    </location>
    <ligand>
        <name>Mn(2+)</name>
        <dbReference type="ChEBI" id="CHEBI:29035"/>
        <label>4</label>
    </ligand>
</feature>
<feature type="binding site" evidence="1">
    <location>
        <position position="871"/>
    </location>
    <ligand>
        <name>Mg(2+)</name>
        <dbReference type="ChEBI" id="CHEBI:18420"/>
        <label>4</label>
    </ligand>
</feature>
<feature type="binding site" evidence="1">
    <location>
        <position position="871"/>
    </location>
    <ligand>
        <name>Mn(2+)</name>
        <dbReference type="ChEBI" id="CHEBI:29035"/>
        <label>4</label>
    </ligand>
</feature>
<accession>Q8F832</accession>
<organism>
    <name type="scientific">Leptospira interrogans serogroup Icterohaemorrhagiae serovar Lai (strain 56601)</name>
    <dbReference type="NCBI Taxonomy" id="189518"/>
    <lineage>
        <taxon>Bacteria</taxon>
        <taxon>Pseudomonadati</taxon>
        <taxon>Spirochaetota</taxon>
        <taxon>Spirochaetia</taxon>
        <taxon>Leptospirales</taxon>
        <taxon>Leptospiraceae</taxon>
        <taxon>Leptospira</taxon>
    </lineage>
</organism>
<evidence type="ECO:0000255" key="1">
    <source>
        <dbReference type="HAMAP-Rule" id="MF_01210"/>
    </source>
</evidence>